<reference key="1">
    <citation type="journal article" date="2000" name="Nature">
        <title>Sequence and analysis of chromosome 5 of the plant Arabidopsis thaliana.</title>
        <authorList>
            <person name="Tabata S."/>
            <person name="Kaneko T."/>
            <person name="Nakamura Y."/>
            <person name="Kotani H."/>
            <person name="Kato T."/>
            <person name="Asamizu E."/>
            <person name="Miyajima N."/>
            <person name="Sasamoto S."/>
            <person name="Kimura T."/>
            <person name="Hosouchi T."/>
            <person name="Kawashima K."/>
            <person name="Kohara M."/>
            <person name="Matsumoto M."/>
            <person name="Matsuno A."/>
            <person name="Muraki A."/>
            <person name="Nakayama S."/>
            <person name="Nakazaki N."/>
            <person name="Naruo K."/>
            <person name="Okumura S."/>
            <person name="Shinpo S."/>
            <person name="Takeuchi C."/>
            <person name="Wada T."/>
            <person name="Watanabe A."/>
            <person name="Yamada M."/>
            <person name="Yasuda M."/>
            <person name="Sato S."/>
            <person name="de la Bastide M."/>
            <person name="Huang E."/>
            <person name="Spiegel L."/>
            <person name="Gnoj L."/>
            <person name="O'Shaughnessy A."/>
            <person name="Preston R."/>
            <person name="Habermann K."/>
            <person name="Murray J."/>
            <person name="Johnson D."/>
            <person name="Rohlfing T."/>
            <person name="Nelson J."/>
            <person name="Stoneking T."/>
            <person name="Pepin K."/>
            <person name="Spieth J."/>
            <person name="Sekhon M."/>
            <person name="Armstrong J."/>
            <person name="Becker M."/>
            <person name="Belter E."/>
            <person name="Cordum H."/>
            <person name="Cordes M."/>
            <person name="Courtney L."/>
            <person name="Courtney W."/>
            <person name="Dante M."/>
            <person name="Du H."/>
            <person name="Edwards J."/>
            <person name="Fryman J."/>
            <person name="Haakensen B."/>
            <person name="Lamar E."/>
            <person name="Latreille P."/>
            <person name="Leonard S."/>
            <person name="Meyer R."/>
            <person name="Mulvaney E."/>
            <person name="Ozersky P."/>
            <person name="Riley A."/>
            <person name="Strowmatt C."/>
            <person name="Wagner-McPherson C."/>
            <person name="Wollam A."/>
            <person name="Yoakum M."/>
            <person name="Bell M."/>
            <person name="Dedhia N."/>
            <person name="Parnell L."/>
            <person name="Shah R."/>
            <person name="Rodriguez M."/>
            <person name="Hoon See L."/>
            <person name="Vil D."/>
            <person name="Baker J."/>
            <person name="Kirchoff K."/>
            <person name="Toth K."/>
            <person name="King L."/>
            <person name="Bahret A."/>
            <person name="Miller B."/>
            <person name="Marra M.A."/>
            <person name="Martienssen R."/>
            <person name="McCombie W.R."/>
            <person name="Wilson R.K."/>
            <person name="Murphy G."/>
            <person name="Bancroft I."/>
            <person name="Volckaert G."/>
            <person name="Wambutt R."/>
            <person name="Duesterhoeft A."/>
            <person name="Stiekema W."/>
            <person name="Pohl T."/>
            <person name="Entian K.-D."/>
            <person name="Terryn N."/>
            <person name="Hartley N."/>
            <person name="Bent E."/>
            <person name="Johnson S."/>
            <person name="Langham S.-A."/>
            <person name="McCullagh B."/>
            <person name="Robben J."/>
            <person name="Grymonprez B."/>
            <person name="Zimmermann W."/>
            <person name="Ramsperger U."/>
            <person name="Wedler H."/>
            <person name="Balke K."/>
            <person name="Wedler E."/>
            <person name="Peters S."/>
            <person name="van Staveren M."/>
            <person name="Dirkse W."/>
            <person name="Mooijman P."/>
            <person name="Klein Lankhorst R."/>
            <person name="Weitzenegger T."/>
            <person name="Bothe G."/>
            <person name="Rose M."/>
            <person name="Hauf J."/>
            <person name="Berneiser S."/>
            <person name="Hempel S."/>
            <person name="Feldpausch M."/>
            <person name="Lamberth S."/>
            <person name="Villarroel R."/>
            <person name="Gielen J."/>
            <person name="Ardiles W."/>
            <person name="Bents O."/>
            <person name="Lemcke K."/>
            <person name="Kolesov G."/>
            <person name="Mayer K.F.X."/>
            <person name="Rudd S."/>
            <person name="Schoof H."/>
            <person name="Schueller C."/>
            <person name="Zaccaria P."/>
            <person name="Mewes H.-W."/>
            <person name="Bevan M."/>
            <person name="Fransz P.F."/>
        </authorList>
    </citation>
    <scope>NUCLEOTIDE SEQUENCE [LARGE SCALE GENOMIC DNA]</scope>
    <source>
        <strain>cv. Columbia</strain>
    </source>
</reference>
<reference key="2">
    <citation type="journal article" date="2017" name="Plant J.">
        <title>Araport11: a complete reannotation of the Arabidopsis thaliana reference genome.</title>
        <authorList>
            <person name="Cheng C.Y."/>
            <person name="Krishnakumar V."/>
            <person name="Chan A.P."/>
            <person name="Thibaud-Nissen F."/>
            <person name="Schobel S."/>
            <person name="Town C.D."/>
        </authorList>
    </citation>
    <scope>GENOME REANNOTATION</scope>
    <source>
        <strain>cv. Columbia</strain>
    </source>
</reference>
<reference key="3">
    <citation type="journal article" date="2003" name="Science">
        <title>Empirical analysis of transcriptional activity in the Arabidopsis genome.</title>
        <authorList>
            <person name="Yamada K."/>
            <person name="Lim J."/>
            <person name="Dale J.M."/>
            <person name="Chen H."/>
            <person name="Shinn P."/>
            <person name="Palm C.J."/>
            <person name="Southwick A.M."/>
            <person name="Wu H.C."/>
            <person name="Kim C.J."/>
            <person name="Nguyen M."/>
            <person name="Pham P.K."/>
            <person name="Cheuk R.F."/>
            <person name="Karlin-Newmann G."/>
            <person name="Liu S.X."/>
            <person name="Lam B."/>
            <person name="Sakano H."/>
            <person name="Wu T."/>
            <person name="Yu G."/>
            <person name="Miranda M."/>
            <person name="Quach H.L."/>
            <person name="Tripp M."/>
            <person name="Chang C.H."/>
            <person name="Lee J.M."/>
            <person name="Toriumi M.J."/>
            <person name="Chan M.M."/>
            <person name="Tang C.C."/>
            <person name="Onodera C.S."/>
            <person name="Deng J.M."/>
            <person name="Akiyama K."/>
            <person name="Ansari Y."/>
            <person name="Arakawa T."/>
            <person name="Banh J."/>
            <person name="Banno F."/>
            <person name="Bowser L."/>
            <person name="Brooks S.Y."/>
            <person name="Carninci P."/>
            <person name="Chao Q."/>
            <person name="Choy N."/>
            <person name="Enju A."/>
            <person name="Goldsmith A.D."/>
            <person name="Gurjal M."/>
            <person name="Hansen N.F."/>
            <person name="Hayashizaki Y."/>
            <person name="Johnson-Hopson C."/>
            <person name="Hsuan V.W."/>
            <person name="Iida K."/>
            <person name="Karnes M."/>
            <person name="Khan S."/>
            <person name="Koesema E."/>
            <person name="Ishida J."/>
            <person name="Jiang P.X."/>
            <person name="Jones T."/>
            <person name="Kawai J."/>
            <person name="Kamiya A."/>
            <person name="Meyers C."/>
            <person name="Nakajima M."/>
            <person name="Narusaka M."/>
            <person name="Seki M."/>
            <person name="Sakurai T."/>
            <person name="Satou M."/>
            <person name="Tamse R."/>
            <person name="Vaysberg M."/>
            <person name="Wallender E.K."/>
            <person name="Wong C."/>
            <person name="Yamamura Y."/>
            <person name="Yuan S."/>
            <person name="Shinozaki K."/>
            <person name="Davis R.W."/>
            <person name="Theologis A."/>
            <person name="Ecker J.R."/>
        </authorList>
    </citation>
    <scope>NUCLEOTIDE SEQUENCE [LARGE SCALE MRNA]</scope>
    <source>
        <strain>cv. Columbia</strain>
    </source>
</reference>
<reference key="4">
    <citation type="submission" date="2004-12" db="EMBL/GenBank/DDBJ databases">
        <title>Arabidopsis ORF clones.</title>
        <authorList>
            <person name="Shinn P."/>
            <person name="Chen H."/>
            <person name="Cheuk R.F."/>
            <person name="Kim C.J."/>
            <person name="Ecker J.R."/>
        </authorList>
    </citation>
    <scope>NUCLEOTIDE SEQUENCE [LARGE SCALE MRNA]</scope>
    <source>
        <strain>cv. Columbia</strain>
    </source>
</reference>
<reference key="5">
    <citation type="journal article" date="2008" name="Plant J.">
        <title>Characterization of a sub-family of Arabidopsis genes with the SPX domain reveals their diverse functions in plant tolerance to phosphorus starvation.</title>
        <authorList>
            <person name="Duan K."/>
            <person name="Yi K."/>
            <person name="Dang L."/>
            <person name="Huang H."/>
            <person name="Wu W."/>
            <person name="Wu P."/>
        </authorList>
    </citation>
    <scope>GENE FAMILY</scope>
</reference>
<name>SPX4_ARATH</name>
<proteinExistence type="evidence at transcript level"/>
<sequence length="318" mass="36036">MKFGKEFRTHLEETLPEWRDKFLCYKPLKKLLKYYPYYSADFGPANSDHNDSRPVFADTTNISSAADDGGVVPGVRPSEDLQGSFVRILNDELEKFNDFYVDKEEDFVIRLQELKERIEQVKEKNGEFASESEFSEEMMDIRRDLVTIHGEMVLLKNYSSLNFAGLVKILKKYDKRTGGLLRLPFTQLVLHQPFFTTEPLTRLVRECEANLELLFPSEAEVVESSSAVQAHSSSHQHNSPRISAETSSTLGNENLDIYKSTLAAMRAIRGLQKASSTYNPLSFSSLLQNEDDETVTAENSPNSGNKDDSEKEDTGPSH</sequence>
<dbReference type="EMBL" id="AL353993">
    <property type="protein sequence ID" value="CAB89343.1"/>
    <property type="status" value="ALT_INIT"/>
    <property type="molecule type" value="Genomic_DNA"/>
</dbReference>
<dbReference type="EMBL" id="CP002688">
    <property type="protein sequence ID" value="AED92150.1"/>
    <property type="molecule type" value="Genomic_DNA"/>
</dbReference>
<dbReference type="EMBL" id="AY050440">
    <property type="protein sequence ID" value="AAK91456.1"/>
    <property type="molecule type" value="mRNA"/>
</dbReference>
<dbReference type="EMBL" id="BT020408">
    <property type="protein sequence ID" value="AAV97799.1"/>
    <property type="molecule type" value="mRNA"/>
</dbReference>
<dbReference type="PIR" id="T49968">
    <property type="entry name" value="T49968"/>
</dbReference>
<dbReference type="RefSeq" id="NP_001330175.1">
    <property type="nucleotide sequence ID" value="NM_001343398.1"/>
</dbReference>
<dbReference type="RefSeq" id="NP_568312.1">
    <property type="nucleotide sequence ID" value="NM_121537.3"/>
</dbReference>
<dbReference type="SMR" id="Q94A21"/>
<dbReference type="BioGRID" id="16662">
    <property type="interactions" value="7"/>
</dbReference>
<dbReference type="FunCoup" id="Q94A21">
    <property type="interactions" value="2"/>
</dbReference>
<dbReference type="IntAct" id="Q94A21">
    <property type="interactions" value="7"/>
</dbReference>
<dbReference type="STRING" id="3702.Q94A21"/>
<dbReference type="PaxDb" id="3702-AT5G15330.1"/>
<dbReference type="ProteomicsDB" id="228318"/>
<dbReference type="EnsemblPlants" id="AT5G15330.1">
    <property type="protein sequence ID" value="AT5G15330.1"/>
    <property type="gene ID" value="AT5G15330"/>
</dbReference>
<dbReference type="GeneID" id="831385"/>
<dbReference type="Gramene" id="AT5G15330.1">
    <property type="protein sequence ID" value="AT5G15330.1"/>
    <property type="gene ID" value="AT5G15330"/>
</dbReference>
<dbReference type="KEGG" id="ath:AT5G15330"/>
<dbReference type="Araport" id="AT5G15330"/>
<dbReference type="TAIR" id="AT5G15330">
    <property type="gene designation" value="SPX4"/>
</dbReference>
<dbReference type="eggNOG" id="KOG1161">
    <property type="taxonomic scope" value="Eukaryota"/>
</dbReference>
<dbReference type="HOGENOM" id="CLU_057600_0_0_1"/>
<dbReference type="InParanoid" id="Q94A21"/>
<dbReference type="OMA" id="MDIYRST"/>
<dbReference type="OrthoDB" id="6493944at2759"/>
<dbReference type="PhylomeDB" id="Q94A21"/>
<dbReference type="PRO" id="PR:Q94A21"/>
<dbReference type="Proteomes" id="UP000006548">
    <property type="component" value="Chromosome 5"/>
</dbReference>
<dbReference type="ExpressionAtlas" id="Q94A21">
    <property type="expression patterns" value="baseline and differential"/>
</dbReference>
<dbReference type="GO" id="GO:0005829">
    <property type="term" value="C:cytosol"/>
    <property type="evidence" value="ECO:0000314"/>
    <property type="project" value="TAIR"/>
</dbReference>
<dbReference type="GO" id="GO:0005634">
    <property type="term" value="C:nucleus"/>
    <property type="evidence" value="ECO:0000314"/>
    <property type="project" value="TAIR"/>
</dbReference>
<dbReference type="GO" id="GO:0016036">
    <property type="term" value="P:cellular response to phosphate starvation"/>
    <property type="evidence" value="ECO:0000270"/>
    <property type="project" value="TAIR"/>
</dbReference>
<dbReference type="GO" id="GO:0055062">
    <property type="term" value="P:phosphate ion homeostasis"/>
    <property type="evidence" value="ECO:0000315"/>
    <property type="project" value="TAIR"/>
</dbReference>
<dbReference type="CDD" id="cd14481">
    <property type="entry name" value="SPX_AtSPX1_like"/>
    <property type="match status" value="1"/>
</dbReference>
<dbReference type="InterPro" id="IPR004331">
    <property type="entry name" value="SPX_dom"/>
</dbReference>
<dbReference type="InterPro" id="IPR031142">
    <property type="entry name" value="SPX_prot"/>
</dbReference>
<dbReference type="PANTHER" id="PTHR45978">
    <property type="entry name" value="SPX DOMAIN-CONTAINING PROTEIN 3"/>
    <property type="match status" value="1"/>
</dbReference>
<dbReference type="PANTHER" id="PTHR45978:SF7">
    <property type="entry name" value="SPX DOMAIN-CONTAINING PROTEIN 4"/>
    <property type="match status" value="1"/>
</dbReference>
<dbReference type="Pfam" id="PF03105">
    <property type="entry name" value="SPX"/>
    <property type="match status" value="3"/>
</dbReference>
<dbReference type="PROSITE" id="PS51382">
    <property type="entry name" value="SPX"/>
    <property type="match status" value="1"/>
</dbReference>
<feature type="chain" id="PRO_0000398345" description="SPX domain-containing protein 4">
    <location>
        <begin position="1"/>
        <end position="318"/>
    </location>
</feature>
<feature type="domain" description="SPX" evidence="1">
    <location>
        <begin position="1"/>
        <end position="187"/>
    </location>
</feature>
<feature type="region of interest" description="Disordered" evidence="2">
    <location>
        <begin position="226"/>
        <end position="247"/>
    </location>
</feature>
<feature type="region of interest" description="Disordered" evidence="2">
    <location>
        <begin position="284"/>
        <end position="318"/>
    </location>
</feature>
<feature type="compositionally biased region" description="Low complexity" evidence="2">
    <location>
        <begin position="226"/>
        <end position="237"/>
    </location>
</feature>
<feature type="compositionally biased region" description="Basic and acidic residues" evidence="2">
    <location>
        <begin position="305"/>
        <end position="318"/>
    </location>
</feature>
<comment type="sequence caution" evidence="3">
    <conflict type="erroneous initiation">
        <sequence resource="EMBL-CDS" id="CAB89343"/>
    </conflict>
    <text>Extended N-terminus.</text>
</comment>
<evidence type="ECO:0000255" key="1">
    <source>
        <dbReference type="PROSITE-ProRule" id="PRU00714"/>
    </source>
</evidence>
<evidence type="ECO:0000256" key="2">
    <source>
        <dbReference type="SAM" id="MobiDB-lite"/>
    </source>
</evidence>
<evidence type="ECO:0000305" key="3"/>
<protein>
    <recommendedName>
        <fullName>SPX domain-containing protein 4</fullName>
    </recommendedName>
    <alternativeName>
        <fullName>Protein SPX DOMAIN GENE 4</fullName>
        <shortName>AtSPX4</shortName>
    </alternativeName>
</protein>
<keyword id="KW-1185">Reference proteome</keyword>
<gene>
    <name type="primary">SPX4</name>
    <name type="ordered locus">At5g15330</name>
    <name type="ORF">F8M21_220</name>
</gene>
<organism>
    <name type="scientific">Arabidopsis thaliana</name>
    <name type="common">Mouse-ear cress</name>
    <dbReference type="NCBI Taxonomy" id="3702"/>
    <lineage>
        <taxon>Eukaryota</taxon>
        <taxon>Viridiplantae</taxon>
        <taxon>Streptophyta</taxon>
        <taxon>Embryophyta</taxon>
        <taxon>Tracheophyta</taxon>
        <taxon>Spermatophyta</taxon>
        <taxon>Magnoliopsida</taxon>
        <taxon>eudicotyledons</taxon>
        <taxon>Gunneridae</taxon>
        <taxon>Pentapetalae</taxon>
        <taxon>rosids</taxon>
        <taxon>malvids</taxon>
        <taxon>Brassicales</taxon>
        <taxon>Brassicaceae</taxon>
        <taxon>Camelineae</taxon>
        <taxon>Arabidopsis</taxon>
    </lineage>
</organism>
<accession>Q94A21</accession>
<accession>Q9LXE9</accession>